<protein>
    <recommendedName>
        <fullName evidence="1">Protein-export protein SecB</fullName>
    </recommendedName>
</protein>
<keyword id="KW-0143">Chaperone</keyword>
<keyword id="KW-0963">Cytoplasm</keyword>
<keyword id="KW-0653">Protein transport</keyword>
<keyword id="KW-0811">Translocation</keyword>
<keyword id="KW-0813">Transport</keyword>
<comment type="function">
    <text evidence="1">One of the proteins required for the normal export of preproteins out of the cell cytoplasm. It is a molecular chaperone that binds to a subset of precursor proteins, maintaining them in a translocation-competent state. It also specifically binds to its receptor SecA.</text>
</comment>
<comment type="subunit">
    <text evidence="1">Homotetramer, a dimer of dimers. One homotetramer interacts with 1 SecA dimer.</text>
</comment>
<comment type="subcellular location">
    <subcellularLocation>
        <location evidence="1">Cytoplasm</location>
    </subcellularLocation>
</comment>
<comment type="similarity">
    <text evidence="1">Belongs to the SecB family.</text>
</comment>
<proteinExistence type="inferred from homology"/>
<accession>A6WHC9</accession>
<feature type="chain" id="PRO_1000062518" description="Protein-export protein SecB">
    <location>
        <begin position="1"/>
        <end position="161"/>
    </location>
</feature>
<name>SECB_SHEB8</name>
<gene>
    <name evidence="1" type="primary">secB</name>
    <name type="ordered locus">Shew185_0045</name>
</gene>
<evidence type="ECO:0000255" key="1">
    <source>
        <dbReference type="HAMAP-Rule" id="MF_00821"/>
    </source>
</evidence>
<dbReference type="EMBL" id="CP000753">
    <property type="protein sequence ID" value="ABS06218.1"/>
    <property type="molecule type" value="Genomic_DNA"/>
</dbReference>
<dbReference type="RefSeq" id="WP_006083777.1">
    <property type="nucleotide sequence ID" value="NC_009665.1"/>
</dbReference>
<dbReference type="SMR" id="A6WHC9"/>
<dbReference type="GeneID" id="11770417"/>
<dbReference type="KEGG" id="sbm:Shew185_0045"/>
<dbReference type="HOGENOM" id="CLU_111574_1_0_6"/>
<dbReference type="GO" id="GO:0005737">
    <property type="term" value="C:cytoplasm"/>
    <property type="evidence" value="ECO:0007669"/>
    <property type="project" value="UniProtKB-SubCell"/>
</dbReference>
<dbReference type="GO" id="GO:0051082">
    <property type="term" value="F:unfolded protein binding"/>
    <property type="evidence" value="ECO:0007669"/>
    <property type="project" value="InterPro"/>
</dbReference>
<dbReference type="GO" id="GO:0006457">
    <property type="term" value="P:protein folding"/>
    <property type="evidence" value="ECO:0007669"/>
    <property type="project" value="UniProtKB-UniRule"/>
</dbReference>
<dbReference type="GO" id="GO:0051262">
    <property type="term" value="P:protein tetramerization"/>
    <property type="evidence" value="ECO:0007669"/>
    <property type="project" value="InterPro"/>
</dbReference>
<dbReference type="GO" id="GO:0015031">
    <property type="term" value="P:protein transport"/>
    <property type="evidence" value="ECO:0007669"/>
    <property type="project" value="UniProtKB-UniRule"/>
</dbReference>
<dbReference type="Gene3D" id="3.10.420.10">
    <property type="entry name" value="SecB-like"/>
    <property type="match status" value="1"/>
</dbReference>
<dbReference type="HAMAP" id="MF_00821">
    <property type="entry name" value="SecB"/>
    <property type="match status" value="1"/>
</dbReference>
<dbReference type="InterPro" id="IPR003708">
    <property type="entry name" value="SecB"/>
</dbReference>
<dbReference type="InterPro" id="IPR035958">
    <property type="entry name" value="SecB-like_sf"/>
</dbReference>
<dbReference type="NCBIfam" id="NF004393">
    <property type="entry name" value="PRK05751.1-4"/>
    <property type="match status" value="1"/>
</dbReference>
<dbReference type="NCBIfam" id="TIGR00809">
    <property type="entry name" value="secB"/>
    <property type="match status" value="1"/>
</dbReference>
<dbReference type="PANTHER" id="PTHR36918">
    <property type="match status" value="1"/>
</dbReference>
<dbReference type="PANTHER" id="PTHR36918:SF1">
    <property type="entry name" value="PROTEIN-EXPORT PROTEIN SECB"/>
    <property type="match status" value="1"/>
</dbReference>
<dbReference type="Pfam" id="PF02556">
    <property type="entry name" value="SecB"/>
    <property type="match status" value="1"/>
</dbReference>
<dbReference type="PRINTS" id="PR01594">
    <property type="entry name" value="SECBCHAPRONE"/>
</dbReference>
<dbReference type="SUPFAM" id="SSF54611">
    <property type="entry name" value="SecB-like"/>
    <property type="match status" value="1"/>
</dbReference>
<organism>
    <name type="scientific">Shewanella baltica (strain OS185)</name>
    <dbReference type="NCBI Taxonomy" id="402882"/>
    <lineage>
        <taxon>Bacteria</taxon>
        <taxon>Pseudomonadati</taxon>
        <taxon>Pseudomonadota</taxon>
        <taxon>Gammaproteobacteria</taxon>
        <taxon>Alteromonadales</taxon>
        <taxon>Shewanellaceae</taxon>
        <taxon>Shewanella</taxon>
    </lineage>
</organism>
<sequence length="161" mass="17483">MAEVANNEQQAPQFNIQRVYTKDVSFETPNSPAVFQKEWNPEVKLDLDTRSAKLADDVYEVVLSLTVTAQNGGDTAFLCEVQQAGIFSITGLTEPQLAHSLGAYCPNILFPYARETVGSLVGRGTFPQLNLAPVNFDALFAQYVQQRQAAATAPAAEEANA</sequence>
<reference key="1">
    <citation type="submission" date="2007-07" db="EMBL/GenBank/DDBJ databases">
        <title>Complete sequence of chromosome of Shewanella baltica OS185.</title>
        <authorList>
            <consortium name="US DOE Joint Genome Institute"/>
            <person name="Copeland A."/>
            <person name="Lucas S."/>
            <person name="Lapidus A."/>
            <person name="Barry K."/>
            <person name="Glavina del Rio T."/>
            <person name="Dalin E."/>
            <person name="Tice H."/>
            <person name="Pitluck S."/>
            <person name="Sims D."/>
            <person name="Brettin T."/>
            <person name="Bruce D."/>
            <person name="Detter J.C."/>
            <person name="Han C."/>
            <person name="Schmutz J."/>
            <person name="Larimer F."/>
            <person name="Land M."/>
            <person name="Hauser L."/>
            <person name="Kyrpides N."/>
            <person name="Mikhailova N."/>
            <person name="Brettar I."/>
            <person name="Rodrigues J."/>
            <person name="Konstantinidis K."/>
            <person name="Tiedje J."/>
            <person name="Richardson P."/>
        </authorList>
    </citation>
    <scope>NUCLEOTIDE SEQUENCE [LARGE SCALE GENOMIC DNA]</scope>
    <source>
        <strain>OS185</strain>
    </source>
</reference>